<keyword id="KW-0131">Cell cycle</keyword>
<keyword id="KW-0132">Cell division</keyword>
<keyword id="KW-0256">Endoplasmic reticulum</keyword>
<keyword id="KW-0325">Glycoprotein</keyword>
<keyword id="KW-0472">Membrane</keyword>
<keyword id="KW-0539">Nucleus</keyword>
<keyword id="KW-1185">Reference proteome</keyword>
<keyword id="KW-0812">Transmembrane</keyword>
<keyword id="KW-1133">Transmembrane helix</keyword>
<gene>
    <name type="primary">rtn1</name>
    <name type="synonym">cwl1</name>
    <name type="ORF">SPBC31A8.01c</name>
    <name type="ORF">SPBC651.13c</name>
</gene>
<organism>
    <name type="scientific">Schizosaccharomyces pombe (strain 972 / ATCC 24843)</name>
    <name type="common">Fission yeast</name>
    <dbReference type="NCBI Taxonomy" id="284812"/>
    <lineage>
        <taxon>Eukaryota</taxon>
        <taxon>Fungi</taxon>
        <taxon>Dikarya</taxon>
        <taxon>Ascomycota</taxon>
        <taxon>Taphrinomycotina</taxon>
        <taxon>Schizosaccharomycetes</taxon>
        <taxon>Schizosaccharomycetales</taxon>
        <taxon>Schizosaccharomycetaceae</taxon>
        <taxon>Schizosaccharomyces</taxon>
    </lineage>
</organism>
<name>RTN1_SCHPO</name>
<comment type="function">
    <text evidence="4">Required for the correct positioning of the cellular division plane by delimiting the actomyosin ring assembly at the cell equator. Overexpression causes cell lysis.</text>
</comment>
<comment type="subunit">
    <text evidence="4">Interacts with TTS1 and YOP1.</text>
</comment>
<comment type="subcellular location">
    <subcellularLocation>
        <location evidence="4">Endoplasmic reticulum membrane</location>
        <topology evidence="4">Multi-pass membrane protein</topology>
    </subcellularLocation>
    <subcellularLocation>
        <location evidence="4">Nucleus membrane</location>
        <topology evidence="4">Multi-pass membrane protein</topology>
    </subcellularLocation>
    <text>Enriched at the cell equator during mitosis.</text>
</comment>
<feature type="chain" id="PRO_0000079619" description="Reticulon-like protein 1">
    <location>
        <begin position="1"/>
        <end position="308"/>
    </location>
</feature>
<feature type="transmembrane region" description="Helical" evidence="1">
    <location>
        <begin position="138"/>
        <end position="158"/>
    </location>
</feature>
<feature type="transmembrane region" description="Helical" evidence="1">
    <location>
        <begin position="166"/>
        <end position="186"/>
    </location>
</feature>
<feature type="transmembrane region" description="Helical" evidence="1">
    <location>
        <begin position="233"/>
        <end position="253"/>
    </location>
</feature>
<feature type="transmembrane region" description="Helical" evidence="1">
    <location>
        <begin position="255"/>
        <end position="275"/>
    </location>
</feature>
<feature type="domain" description="Reticulon" evidence="2">
    <location>
        <begin position="127"/>
        <end position="308"/>
    </location>
</feature>
<feature type="region of interest" description="Disordered" evidence="3">
    <location>
        <begin position="1"/>
        <end position="22"/>
    </location>
</feature>
<feature type="region of interest" description="Disordered" evidence="3">
    <location>
        <begin position="41"/>
        <end position="92"/>
    </location>
</feature>
<feature type="compositionally biased region" description="Polar residues" evidence="3">
    <location>
        <begin position="1"/>
        <end position="17"/>
    </location>
</feature>
<feature type="compositionally biased region" description="Polar residues" evidence="3">
    <location>
        <begin position="41"/>
        <end position="66"/>
    </location>
</feature>
<feature type="compositionally biased region" description="Low complexity" evidence="3">
    <location>
        <begin position="67"/>
        <end position="81"/>
    </location>
</feature>
<feature type="glycosylation site" description="N-linked (GlcNAc...) asparagine" evidence="1">
    <location>
        <position position="65"/>
    </location>
</feature>
<feature type="glycosylation site" description="N-linked (GlcNAc...) asparagine" evidence="1">
    <location>
        <position position="113"/>
    </location>
</feature>
<feature type="glycosylation site" description="N-linked (GlcNAc...) asparagine" evidence="1">
    <location>
        <position position="135"/>
    </location>
</feature>
<feature type="glycosylation site" description="N-linked (GlcNAc...) asparagine" evidence="1">
    <location>
        <position position="303"/>
    </location>
</feature>
<protein>
    <recommendedName>
        <fullName>Reticulon-like protein 1</fullName>
    </recommendedName>
    <alternativeName>
        <fullName>Cell lysis protein cwl1</fullName>
    </alternativeName>
</protein>
<proteinExistence type="evidence at protein level"/>
<accession>P53694</accession>
<sequence>MSEQHSLNPFESGSVTASDVAAAKSGAEDLVNTLTAHTVHPSTELPSATSFPSALPNSENPVIQNISSSSSEPHHTSQSTPGETSSPVCPVSGAHGGADKKCPALEAGCPFTNTTKQNVDPEISNALWSVLTWKNTSCSFSTLMSILALVYVPSWINLPRLFFRTFRYVFLITSIIEFGGLFASNGKRGVLSHFRSSYITCDSKALDRIVNSIVDIFNVMLIQFQRILFAESPILTFTASVAAFIEFFLSGFLSYKSLFVWNVLFAFILPRLYVCNERSIKHLVASLERSGDKLKKQATETINTTVNK</sequence>
<evidence type="ECO:0000255" key="1"/>
<evidence type="ECO:0000255" key="2">
    <source>
        <dbReference type="PROSITE-ProRule" id="PRU00170"/>
    </source>
</evidence>
<evidence type="ECO:0000256" key="3">
    <source>
        <dbReference type="SAM" id="MobiDB-lite"/>
    </source>
</evidence>
<evidence type="ECO:0000269" key="4">
    <source>
    </source>
</evidence>
<dbReference type="EMBL" id="X94445">
    <property type="protein sequence ID" value="CAA64219.1"/>
    <property type="molecule type" value="Genomic_DNA"/>
</dbReference>
<dbReference type="EMBL" id="CU329671">
    <property type="protein sequence ID" value="CAB37626.1"/>
    <property type="molecule type" value="Genomic_DNA"/>
</dbReference>
<dbReference type="PIR" id="S71746">
    <property type="entry name" value="S71746"/>
</dbReference>
<dbReference type="RefSeq" id="NP_001018789.2">
    <property type="nucleotide sequence ID" value="NM_001021421.3"/>
</dbReference>
<dbReference type="BioGRID" id="280345">
    <property type="interactions" value="56"/>
</dbReference>
<dbReference type="STRING" id="284812.P53694"/>
<dbReference type="GlyCosmos" id="P53694">
    <property type="glycosylation" value="4 sites, No reported glycans"/>
</dbReference>
<dbReference type="iPTMnet" id="P53694"/>
<dbReference type="PaxDb" id="4896-SPBC31A8.01c.1"/>
<dbReference type="EnsemblFungi" id="SPBC31A8.01c.1">
    <property type="protein sequence ID" value="SPBC31A8.01c.1:pep"/>
    <property type="gene ID" value="SPBC31A8.01c"/>
</dbReference>
<dbReference type="GeneID" id="3361269"/>
<dbReference type="KEGG" id="spo:3361269"/>
<dbReference type="PomBase" id="SPBC31A8.01c">
    <property type="gene designation" value="rtn1"/>
</dbReference>
<dbReference type="VEuPathDB" id="FungiDB:SPBC31A8.01c"/>
<dbReference type="eggNOG" id="KOG1792">
    <property type="taxonomic scope" value="Eukaryota"/>
</dbReference>
<dbReference type="HOGENOM" id="CLU_903618_0_0_1"/>
<dbReference type="InParanoid" id="P53694"/>
<dbReference type="OMA" id="WINIPRL"/>
<dbReference type="PhylomeDB" id="P53694"/>
<dbReference type="PRO" id="PR:P53694"/>
<dbReference type="Proteomes" id="UP000002485">
    <property type="component" value="Chromosome II"/>
</dbReference>
<dbReference type="GO" id="GO:0032153">
    <property type="term" value="C:cell division site"/>
    <property type="evidence" value="ECO:0000314"/>
    <property type="project" value="PomBase"/>
</dbReference>
<dbReference type="GO" id="GO:0032541">
    <property type="term" value="C:cortical endoplasmic reticulum"/>
    <property type="evidence" value="ECO:0000314"/>
    <property type="project" value="PomBase"/>
</dbReference>
<dbReference type="GO" id="GO:0098826">
    <property type="term" value="C:endoplasmic reticulum tubular network membrane"/>
    <property type="evidence" value="ECO:0000269"/>
    <property type="project" value="PomBase"/>
</dbReference>
<dbReference type="GO" id="GO:0031965">
    <property type="term" value="C:nuclear membrane"/>
    <property type="evidence" value="ECO:0007669"/>
    <property type="project" value="UniProtKB-SubCell"/>
</dbReference>
<dbReference type="GO" id="GO:0180020">
    <property type="term" value="F:membrane bending activity"/>
    <property type="evidence" value="ECO:0000304"/>
    <property type="project" value="PomBase"/>
</dbReference>
<dbReference type="GO" id="GO:0046625">
    <property type="term" value="F:sphingolipid binding"/>
    <property type="evidence" value="ECO:0000304"/>
    <property type="project" value="PomBase"/>
</dbReference>
<dbReference type="GO" id="GO:0051301">
    <property type="term" value="P:cell division"/>
    <property type="evidence" value="ECO:0007669"/>
    <property type="project" value="UniProtKB-KW"/>
</dbReference>
<dbReference type="GO" id="GO:1990809">
    <property type="term" value="P:endoplasmic reticulum tubular network membrane organization"/>
    <property type="evidence" value="ECO:0000315"/>
    <property type="project" value="PomBase"/>
</dbReference>
<dbReference type="GO" id="GO:0071786">
    <property type="term" value="P:endoplasmic reticulum tubular network organization"/>
    <property type="evidence" value="ECO:0000269"/>
    <property type="project" value="PomBase"/>
</dbReference>
<dbReference type="InterPro" id="IPR003388">
    <property type="entry name" value="Reticulon"/>
</dbReference>
<dbReference type="Pfam" id="PF02453">
    <property type="entry name" value="Reticulon"/>
    <property type="match status" value="1"/>
</dbReference>
<dbReference type="PROSITE" id="PS50845">
    <property type="entry name" value="RETICULON"/>
    <property type="match status" value="1"/>
</dbReference>
<reference key="1">
    <citation type="journal article" date="1996" name="Yeast">
        <title>Characterization of cwl1+, a gene from Schizosaccharomyces pombe whose overexpression causes cell lysis.</title>
        <authorList>
            <person name="Godoy C."/>
            <person name="Arellano M."/>
            <person name="Diaz M."/>
            <person name="Duran A."/>
            <person name="Perez P."/>
        </authorList>
    </citation>
    <scope>NUCLEOTIDE SEQUENCE [GENOMIC DNA]</scope>
</reference>
<reference key="2">
    <citation type="journal article" date="2002" name="Nature">
        <title>The genome sequence of Schizosaccharomyces pombe.</title>
        <authorList>
            <person name="Wood V."/>
            <person name="Gwilliam R."/>
            <person name="Rajandream M.A."/>
            <person name="Lyne M.H."/>
            <person name="Lyne R."/>
            <person name="Stewart A."/>
            <person name="Sgouros J.G."/>
            <person name="Peat N."/>
            <person name="Hayles J."/>
            <person name="Baker S.G."/>
            <person name="Basham D."/>
            <person name="Bowman S."/>
            <person name="Brooks K."/>
            <person name="Brown D."/>
            <person name="Brown S."/>
            <person name="Chillingworth T."/>
            <person name="Churcher C.M."/>
            <person name="Collins M."/>
            <person name="Connor R."/>
            <person name="Cronin A."/>
            <person name="Davis P."/>
            <person name="Feltwell T."/>
            <person name="Fraser A."/>
            <person name="Gentles S."/>
            <person name="Goble A."/>
            <person name="Hamlin N."/>
            <person name="Harris D.E."/>
            <person name="Hidalgo J."/>
            <person name="Hodgson G."/>
            <person name="Holroyd S."/>
            <person name="Hornsby T."/>
            <person name="Howarth S."/>
            <person name="Huckle E.J."/>
            <person name="Hunt S."/>
            <person name="Jagels K."/>
            <person name="James K.D."/>
            <person name="Jones L."/>
            <person name="Jones M."/>
            <person name="Leather S."/>
            <person name="McDonald S."/>
            <person name="McLean J."/>
            <person name="Mooney P."/>
            <person name="Moule S."/>
            <person name="Mungall K.L."/>
            <person name="Murphy L.D."/>
            <person name="Niblett D."/>
            <person name="Odell C."/>
            <person name="Oliver K."/>
            <person name="O'Neil S."/>
            <person name="Pearson D."/>
            <person name="Quail M.A."/>
            <person name="Rabbinowitsch E."/>
            <person name="Rutherford K.M."/>
            <person name="Rutter S."/>
            <person name="Saunders D."/>
            <person name="Seeger K."/>
            <person name="Sharp S."/>
            <person name="Skelton J."/>
            <person name="Simmonds M.N."/>
            <person name="Squares R."/>
            <person name="Squares S."/>
            <person name="Stevens K."/>
            <person name="Taylor K."/>
            <person name="Taylor R.G."/>
            <person name="Tivey A."/>
            <person name="Walsh S.V."/>
            <person name="Warren T."/>
            <person name="Whitehead S."/>
            <person name="Woodward J.R."/>
            <person name="Volckaert G."/>
            <person name="Aert R."/>
            <person name="Robben J."/>
            <person name="Grymonprez B."/>
            <person name="Weltjens I."/>
            <person name="Vanstreels E."/>
            <person name="Rieger M."/>
            <person name="Schaefer M."/>
            <person name="Mueller-Auer S."/>
            <person name="Gabel C."/>
            <person name="Fuchs M."/>
            <person name="Duesterhoeft A."/>
            <person name="Fritzc C."/>
            <person name="Holzer E."/>
            <person name="Moestl D."/>
            <person name="Hilbert H."/>
            <person name="Borzym K."/>
            <person name="Langer I."/>
            <person name="Beck A."/>
            <person name="Lehrach H."/>
            <person name="Reinhardt R."/>
            <person name="Pohl T.M."/>
            <person name="Eger P."/>
            <person name="Zimmermann W."/>
            <person name="Wedler H."/>
            <person name="Wambutt R."/>
            <person name="Purnelle B."/>
            <person name="Goffeau A."/>
            <person name="Cadieu E."/>
            <person name="Dreano S."/>
            <person name="Gloux S."/>
            <person name="Lelaure V."/>
            <person name="Mottier S."/>
            <person name="Galibert F."/>
            <person name="Aves S.J."/>
            <person name="Xiang Z."/>
            <person name="Hunt C."/>
            <person name="Moore K."/>
            <person name="Hurst S.M."/>
            <person name="Lucas M."/>
            <person name="Rochet M."/>
            <person name="Gaillardin C."/>
            <person name="Tallada V.A."/>
            <person name="Garzon A."/>
            <person name="Thode G."/>
            <person name="Daga R.R."/>
            <person name="Cruzado L."/>
            <person name="Jimenez J."/>
            <person name="Sanchez M."/>
            <person name="del Rey F."/>
            <person name="Benito J."/>
            <person name="Dominguez A."/>
            <person name="Revuelta J.L."/>
            <person name="Moreno S."/>
            <person name="Armstrong J."/>
            <person name="Forsburg S.L."/>
            <person name="Cerutti L."/>
            <person name="Lowe T."/>
            <person name="McCombie W.R."/>
            <person name="Paulsen I."/>
            <person name="Potashkin J."/>
            <person name="Shpakovski G.V."/>
            <person name="Ussery D."/>
            <person name="Barrell B.G."/>
            <person name="Nurse P."/>
        </authorList>
    </citation>
    <scope>NUCLEOTIDE SEQUENCE [LARGE SCALE GENOMIC DNA]</scope>
    <source>
        <strain>972 / ATCC 24843</strain>
    </source>
</reference>
<reference key="3">
    <citation type="journal article" date="2010" name="Curr. Biol.">
        <title>The cortical ER network limits the permissive zone for actomyosin ring assembly.</title>
        <authorList>
            <person name="Zhang D."/>
            <person name="Vjestica A."/>
            <person name="Oliferenko S."/>
        </authorList>
    </citation>
    <scope>SUBCELLULAR LOCATION</scope>
    <scope>INTERACTION WITH TTS1 AND YOP1</scope>
    <scope>FUNCTION</scope>
</reference>